<evidence type="ECO:0000255" key="1">
    <source>
        <dbReference type="HAMAP-Rule" id="MF_01708"/>
    </source>
</evidence>
<reference key="1">
    <citation type="submission" date="2006-03" db="EMBL/GenBank/DDBJ databases">
        <title>Complete sequence of Methylobacillus flagellatus KT.</title>
        <authorList>
            <consortium name="US DOE Joint Genome Institute"/>
            <person name="Copeland A."/>
            <person name="Lucas S."/>
            <person name="Lapidus A."/>
            <person name="Barry K."/>
            <person name="Detter J.C."/>
            <person name="Glavina del Rio T."/>
            <person name="Hammon N."/>
            <person name="Israni S."/>
            <person name="Dalin E."/>
            <person name="Tice H."/>
            <person name="Pitluck S."/>
            <person name="Brettin T."/>
            <person name="Bruce D."/>
            <person name="Han C."/>
            <person name="Tapia R."/>
            <person name="Saunders E."/>
            <person name="Gilna P."/>
            <person name="Schmutz J."/>
            <person name="Larimer F."/>
            <person name="Land M."/>
            <person name="Kyrpides N."/>
            <person name="Anderson I."/>
            <person name="Richardson P."/>
        </authorList>
    </citation>
    <scope>NUCLEOTIDE SEQUENCE [LARGE SCALE GENOMIC DNA]</scope>
    <source>
        <strain>ATCC 51484 / DSM 6875 / VKM B-1610 / KT</strain>
    </source>
</reference>
<gene>
    <name evidence="1" type="primary">lolD</name>
    <name type="ordered locus">Mfla_2094</name>
</gene>
<protein>
    <recommendedName>
        <fullName evidence="1">Lipoprotein-releasing system ATP-binding protein LolD</fullName>
        <ecNumber evidence="1">7.6.2.-</ecNumber>
    </recommendedName>
</protein>
<accession>Q1GZH6</accession>
<keyword id="KW-0067">ATP-binding</keyword>
<keyword id="KW-0997">Cell inner membrane</keyword>
<keyword id="KW-1003">Cell membrane</keyword>
<keyword id="KW-0472">Membrane</keyword>
<keyword id="KW-0547">Nucleotide-binding</keyword>
<keyword id="KW-1185">Reference proteome</keyword>
<keyword id="KW-1278">Translocase</keyword>
<keyword id="KW-0813">Transport</keyword>
<comment type="function">
    <text evidence="1">Part of the ABC transporter complex LolCDE involved in the translocation of mature outer membrane-directed lipoproteins, from the inner membrane to the periplasmic chaperone, LolA. Responsible for the formation of the LolA-lipoprotein complex in an ATP-dependent manner.</text>
</comment>
<comment type="subunit">
    <text evidence="1">The complex is composed of two ATP-binding proteins (LolD) and two transmembrane proteins (LolC and LolE).</text>
</comment>
<comment type="subcellular location">
    <subcellularLocation>
        <location evidence="1">Cell inner membrane</location>
        <topology evidence="1">Peripheral membrane protein</topology>
    </subcellularLocation>
</comment>
<comment type="similarity">
    <text evidence="1">Belongs to the ABC transporter superfamily. Lipoprotein translocase (TC 3.A.1.125) family.</text>
</comment>
<dbReference type="EC" id="7.6.2.-" evidence="1"/>
<dbReference type="EMBL" id="CP000284">
    <property type="protein sequence ID" value="ABE50361.1"/>
    <property type="molecule type" value="Genomic_DNA"/>
</dbReference>
<dbReference type="RefSeq" id="WP_011480315.1">
    <property type="nucleotide sequence ID" value="NC_007947.1"/>
</dbReference>
<dbReference type="SMR" id="Q1GZH6"/>
<dbReference type="STRING" id="265072.Mfla_2094"/>
<dbReference type="KEGG" id="mfa:Mfla_2094"/>
<dbReference type="eggNOG" id="COG1136">
    <property type="taxonomic scope" value="Bacteria"/>
</dbReference>
<dbReference type="HOGENOM" id="CLU_000604_1_22_4"/>
<dbReference type="OrthoDB" id="8524638at2"/>
<dbReference type="Proteomes" id="UP000002440">
    <property type="component" value="Chromosome"/>
</dbReference>
<dbReference type="GO" id="GO:0005886">
    <property type="term" value="C:plasma membrane"/>
    <property type="evidence" value="ECO:0007669"/>
    <property type="project" value="UniProtKB-SubCell"/>
</dbReference>
<dbReference type="GO" id="GO:0005524">
    <property type="term" value="F:ATP binding"/>
    <property type="evidence" value="ECO:0007669"/>
    <property type="project" value="UniProtKB-KW"/>
</dbReference>
<dbReference type="GO" id="GO:0016887">
    <property type="term" value="F:ATP hydrolysis activity"/>
    <property type="evidence" value="ECO:0007669"/>
    <property type="project" value="InterPro"/>
</dbReference>
<dbReference type="GO" id="GO:0022857">
    <property type="term" value="F:transmembrane transporter activity"/>
    <property type="evidence" value="ECO:0007669"/>
    <property type="project" value="TreeGrafter"/>
</dbReference>
<dbReference type="GO" id="GO:0044874">
    <property type="term" value="P:lipoprotein localization to outer membrane"/>
    <property type="evidence" value="ECO:0007669"/>
    <property type="project" value="TreeGrafter"/>
</dbReference>
<dbReference type="GO" id="GO:0089705">
    <property type="term" value="P:protein localization to outer membrane"/>
    <property type="evidence" value="ECO:0007669"/>
    <property type="project" value="TreeGrafter"/>
</dbReference>
<dbReference type="CDD" id="cd03255">
    <property type="entry name" value="ABC_MJ0796_LolCDE_FtsE"/>
    <property type="match status" value="1"/>
</dbReference>
<dbReference type="FunFam" id="3.40.50.300:FF:000230">
    <property type="entry name" value="Lipoprotein-releasing system ATP-binding protein LolD"/>
    <property type="match status" value="1"/>
</dbReference>
<dbReference type="Gene3D" id="3.40.50.300">
    <property type="entry name" value="P-loop containing nucleotide triphosphate hydrolases"/>
    <property type="match status" value="1"/>
</dbReference>
<dbReference type="InterPro" id="IPR003593">
    <property type="entry name" value="AAA+_ATPase"/>
</dbReference>
<dbReference type="InterPro" id="IPR003439">
    <property type="entry name" value="ABC_transporter-like_ATP-bd"/>
</dbReference>
<dbReference type="InterPro" id="IPR017871">
    <property type="entry name" value="ABC_transporter-like_CS"/>
</dbReference>
<dbReference type="InterPro" id="IPR015854">
    <property type="entry name" value="ABC_transpr_LolD-like"/>
</dbReference>
<dbReference type="InterPro" id="IPR011924">
    <property type="entry name" value="LolD_lipo_ATP-bd"/>
</dbReference>
<dbReference type="InterPro" id="IPR017911">
    <property type="entry name" value="MacB-like_ATP-bd"/>
</dbReference>
<dbReference type="InterPro" id="IPR027417">
    <property type="entry name" value="P-loop_NTPase"/>
</dbReference>
<dbReference type="NCBIfam" id="TIGR02211">
    <property type="entry name" value="LolD_lipo_ex"/>
    <property type="match status" value="1"/>
</dbReference>
<dbReference type="PANTHER" id="PTHR24220">
    <property type="entry name" value="IMPORT ATP-BINDING PROTEIN"/>
    <property type="match status" value="1"/>
</dbReference>
<dbReference type="PANTHER" id="PTHR24220:SF689">
    <property type="entry name" value="LIPOPROTEIN-RELEASING SYSTEM ATP-BINDING PROTEIN LOLD"/>
    <property type="match status" value="1"/>
</dbReference>
<dbReference type="Pfam" id="PF00005">
    <property type="entry name" value="ABC_tran"/>
    <property type="match status" value="1"/>
</dbReference>
<dbReference type="SMART" id="SM00382">
    <property type="entry name" value="AAA"/>
    <property type="match status" value="1"/>
</dbReference>
<dbReference type="SUPFAM" id="SSF52540">
    <property type="entry name" value="P-loop containing nucleoside triphosphate hydrolases"/>
    <property type="match status" value="1"/>
</dbReference>
<dbReference type="PROSITE" id="PS00211">
    <property type="entry name" value="ABC_TRANSPORTER_1"/>
    <property type="match status" value="1"/>
</dbReference>
<dbReference type="PROSITE" id="PS50893">
    <property type="entry name" value="ABC_TRANSPORTER_2"/>
    <property type="match status" value="1"/>
</dbReference>
<dbReference type="PROSITE" id="PS51244">
    <property type="entry name" value="LOLD"/>
    <property type="match status" value="1"/>
</dbReference>
<proteinExistence type="inferred from homology"/>
<sequence>MSDSTILQCVDLQKTYTGLDVAVLNGISLQVDAGEQIAIVGTSGSGKSTLLHLLGGLDEPSAGSVQVMGKSLAALSEAERGTLRNRALGFVYQFHHLLPEFTALENVALPLMIRRLSRDEALGRAKDVLMQVGLGHRLEHMPGELSGGERQRAAVARALVTNPRCVLADEPTGNLDRHTAQGVFDLLLALNRDQGVALVVVTHDLELAARMQRQYRLQDGRLHTI</sequence>
<name>LOLD_METFK</name>
<feature type="chain" id="PRO_0000272106" description="Lipoprotein-releasing system ATP-binding protein LolD">
    <location>
        <begin position="1"/>
        <end position="225"/>
    </location>
</feature>
<feature type="domain" description="ABC transporter" evidence="1">
    <location>
        <begin position="7"/>
        <end position="225"/>
    </location>
</feature>
<feature type="binding site" evidence="1">
    <location>
        <begin position="41"/>
        <end position="48"/>
    </location>
    <ligand>
        <name>ATP</name>
        <dbReference type="ChEBI" id="CHEBI:30616"/>
    </ligand>
</feature>
<organism>
    <name type="scientific">Methylobacillus flagellatus (strain ATCC 51484 / DSM 6875 / VKM B-1610 / KT)</name>
    <dbReference type="NCBI Taxonomy" id="265072"/>
    <lineage>
        <taxon>Bacteria</taxon>
        <taxon>Pseudomonadati</taxon>
        <taxon>Pseudomonadota</taxon>
        <taxon>Betaproteobacteria</taxon>
        <taxon>Nitrosomonadales</taxon>
        <taxon>Methylophilaceae</taxon>
        <taxon>Methylobacillus</taxon>
    </lineage>
</organism>